<name>GREA_CLOBK</name>
<sequence length="160" mass="17962">MSEAKKYVMTYEGVKKLEEELEYLKTVKRKEITEKIKVALSFGDLSENSEYDEAKNEQAFVEGRIIQLENMLKNASIVDENEVPKDIVSVGSIVKVKDYEFDEEVEYIIVGSAEADPMNNKISNESPVGHGLIGKKVGDIIEVTVPDGVSKYEILEVNRA</sequence>
<protein>
    <recommendedName>
        <fullName evidence="1">Transcription elongation factor GreA</fullName>
    </recommendedName>
    <alternativeName>
        <fullName evidence="1">Transcript cleavage factor GreA</fullName>
    </alternativeName>
</protein>
<proteinExistence type="inferred from homology"/>
<gene>
    <name evidence="1" type="primary">greA</name>
    <name type="ordered locus">CLD_0971</name>
</gene>
<reference key="1">
    <citation type="journal article" date="2007" name="PLoS ONE">
        <title>Analysis of the neurotoxin complex genes in Clostridium botulinum A1-A4 and B1 strains: BoNT/A3, /Ba4 and /B1 clusters are located within plasmids.</title>
        <authorList>
            <person name="Smith T.J."/>
            <person name="Hill K.K."/>
            <person name="Foley B.T."/>
            <person name="Detter J.C."/>
            <person name="Munk A.C."/>
            <person name="Bruce D.C."/>
            <person name="Doggett N.A."/>
            <person name="Smith L.A."/>
            <person name="Marks J.D."/>
            <person name="Xie G."/>
            <person name="Brettin T.S."/>
        </authorList>
    </citation>
    <scope>NUCLEOTIDE SEQUENCE [LARGE SCALE GENOMIC DNA]</scope>
    <source>
        <strain>Okra / Type B1</strain>
    </source>
</reference>
<evidence type="ECO:0000255" key="1">
    <source>
        <dbReference type="HAMAP-Rule" id="MF_00105"/>
    </source>
</evidence>
<accession>B1IGJ3</accession>
<organism>
    <name type="scientific">Clostridium botulinum (strain Okra / Type B1)</name>
    <dbReference type="NCBI Taxonomy" id="498213"/>
    <lineage>
        <taxon>Bacteria</taxon>
        <taxon>Bacillati</taxon>
        <taxon>Bacillota</taxon>
        <taxon>Clostridia</taxon>
        <taxon>Eubacteriales</taxon>
        <taxon>Clostridiaceae</taxon>
        <taxon>Clostridium</taxon>
    </lineage>
</organism>
<feature type="chain" id="PRO_1000094163" description="Transcription elongation factor GreA">
    <location>
        <begin position="1"/>
        <end position="160"/>
    </location>
</feature>
<feature type="coiled-coil region" evidence="1">
    <location>
        <begin position="14"/>
        <end position="76"/>
    </location>
</feature>
<dbReference type="EMBL" id="CP000939">
    <property type="protein sequence ID" value="ACA45980.1"/>
    <property type="molecule type" value="Genomic_DNA"/>
</dbReference>
<dbReference type="RefSeq" id="WP_003361709.1">
    <property type="nucleotide sequence ID" value="NC_010516.1"/>
</dbReference>
<dbReference type="SMR" id="B1IGJ3"/>
<dbReference type="KEGG" id="cbb:CLD_0971"/>
<dbReference type="HOGENOM" id="CLU_101379_2_1_9"/>
<dbReference type="Proteomes" id="UP000008541">
    <property type="component" value="Chromosome"/>
</dbReference>
<dbReference type="GO" id="GO:0003677">
    <property type="term" value="F:DNA binding"/>
    <property type="evidence" value="ECO:0007669"/>
    <property type="project" value="UniProtKB-UniRule"/>
</dbReference>
<dbReference type="GO" id="GO:0070063">
    <property type="term" value="F:RNA polymerase binding"/>
    <property type="evidence" value="ECO:0007669"/>
    <property type="project" value="InterPro"/>
</dbReference>
<dbReference type="GO" id="GO:0006354">
    <property type="term" value="P:DNA-templated transcription elongation"/>
    <property type="evidence" value="ECO:0007669"/>
    <property type="project" value="TreeGrafter"/>
</dbReference>
<dbReference type="GO" id="GO:0032784">
    <property type="term" value="P:regulation of DNA-templated transcription elongation"/>
    <property type="evidence" value="ECO:0007669"/>
    <property type="project" value="UniProtKB-UniRule"/>
</dbReference>
<dbReference type="FunFam" id="1.10.287.180:FF:000001">
    <property type="entry name" value="Transcription elongation factor GreA"/>
    <property type="match status" value="1"/>
</dbReference>
<dbReference type="FunFam" id="3.10.50.30:FF:000001">
    <property type="entry name" value="Transcription elongation factor GreA"/>
    <property type="match status" value="1"/>
</dbReference>
<dbReference type="Gene3D" id="3.10.50.30">
    <property type="entry name" value="Transcription elongation factor, GreA/GreB, C-terminal domain"/>
    <property type="match status" value="1"/>
</dbReference>
<dbReference type="Gene3D" id="1.10.287.180">
    <property type="entry name" value="Transcription elongation factor, GreA/GreB, N-terminal domain"/>
    <property type="match status" value="1"/>
</dbReference>
<dbReference type="HAMAP" id="MF_00105">
    <property type="entry name" value="GreA_GreB"/>
    <property type="match status" value="1"/>
</dbReference>
<dbReference type="InterPro" id="IPR036953">
    <property type="entry name" value="GreA/GreB_C_sf"/>
</dbReference>
<dbReference type="InterPro" id="IPR018151">
    <property type="entry name" value="TF_GreA/GreB_CS"/>
</dbReference>
<dbReference type="InterPro" id="IPR006359">
    <property type="entry name" value="Tscrpt_elong_fac_GreA"/>
</dbReference>
<dbReference type="InterPro" id="IPR028624">
    <property type="entry name" value="Tscrpt_elong_fac_GreA/B"/>
</dbReference>
<dbReference type="InterPro" id="IPR001437">
    <property type="entry name" value="Tscrpt_elong_fac_GreA/B_C"/>
</dbReference>
<dbReference type="InterPro" id="IPR023459">
    <property type="entry name" value="Tscrpt_elong_fac_GreA/B_fam"/>
</dbReference>
<dbReference type="InterPro" id="IPR022691">
    <property type="entry name" value="Tscrpt_elong_fac_GreA/B_N"/>
</dbReference>
<dbReference type="InterPro" id="IPR036805">
    <property type="entry name" value="Tscrpt_elong_fac_GreA/B_N_sf"/>
</dbReference>
<dbReference type="NCBIfam" id="TIGR01462">
    <property type="entry name" value="greA"/>
    <property type="match status" value="1"/>
</dbReference>
<dbReference type="NCBIfam" id="NF001261">
    <property type="entry name" value="PRK00226.1-2"/>
    <property type="match status" value="1"/>
</dbReference>
<dbReference type="NCBIfam" id="NF001263">
    <property type="entry name" value="PRK00226.1-4"/>
    <property type="match status" value="1"/>
</dbReference>
<dbReference type="PANTHER" id="PTHR30437">
    <property type="entry name" value="TRANSCRIPTION ELONGATION FACTOR GREA"/>
    <property type="match status" value="1"/>
</dbReference>
<dbReference type="PANTHER" id="PTHR30437:SF4">
    <property type="entry name" value="TRANSCRIPTION ELONGATION FACTOR GREA"/>
    <property type="match status" value="1"/>
</dbReference>
<dbReference type="Pfam" id="PF01272">
    <property type="entry name" value="GreA_GreB"/>
    <property type="match status" value="1"/>
</dbReference>
<dbReference type="Pfam" id="PF03449">
    <property type="entry name" value="GreA_GreB_N"/>
    <property type="match status" value="1"/>
</dbReference>
<dbReference type="PIRSF" id="PIRSF006092">
    <property type="entry name" value="GreA_GreB"/>
    <property type="match status" value="1"/>
</dbReference>
<dbReference type="SUPFAM" id="SSF54534">
    <property type="entry name" value="FKBP-like"/>
    <property type="match status" value="1"/>
</dbReference>
<dbReference type="SUPFAM" id="SSF46557">
    <property type="entry name" value="GreA transcript cleavage protein, N-terminal domain"/>
    <property type="match status" value="1"/>
</dbReference>
<dbReference type="PROSITE" id="PS00829">
    <property type="entry name" value="GREAB_1"/>
    <property type="match status" value="1"/>
</dbReference>
<dbReference type="PROSITE" id="PS00830">
    <property type="entry name" value="GREAB_2"/>
    <property type="match status" value="1"/>
</dbReference>
<keyword id="KW-0175">Coiled coil</keyword>
<keyword id="KW-0238">DNA-binding</keyword>
<keyword id="KW-0804">Transcription</keyword>
<keyword id="KW-0805">Transcription regulation</keyword>
<comment type="function">
    <text evidence="1">Necessary for efficient RNA polymerase transcription elongation past template-encoded arresting sites. The arresting sites in DNA have the property of trapping a certain fraction of elongating RNA polymerases that pass through, resulting in locked ternary complexes. Cleavage of the nascent transcript by cleavage factors such as GreA or GreB allows the resumption of elongation from the new 3'terminus. GreA releases sequences of 2 to 3 nucleotides.</text>
</comment>
<comment type="similarity">
    <text evidence="1">Belongs to the GreA/GreB family.</text>
</comment>